<keyword id="KW-1185">Reference proteome</keyword>
<keyword id="KW-0687">Ribonucleoprotein</keyword>
<keyword id="KW-0689">Ribosomal protein</keyword>
<keyword id="KW-0694">RNA-binding</keyword>
<keyword id="KW-0699">rRNA-binding</keyword>
<evidence type="ECO:0000255" key="1">
    <source>
        <dbReference type="HAMAP-Rule" id="MF_01307"/>
    </source>
</evidence>
<evidence type="ECO:0000305" key="2"/>
<dbReference type="EMBL" id="CP000783">
    <property type="protein sequence ID" value="ABU75333.1"/>
    <property type="molecule type" value="Genomic_DNA"/>
</dbReference>
<dbReference type="RefSeq" id="WP_004388617.1">
    <property type="nucleotide sequence ID" value="NC_009778.1"/>
</dbReference>
<dbReference type="SMR" id="A7MPG7"/>
<dbReference type="GeneID" id="92804607"/>
<dbReference type="KEGG" id="esa:ESA_00024"/>
<dbReference type="HOGENOM" id="CLU_065898_2_2_6"/>
<dbReference type="Proteomes" id="UP000000260">
    <property type="component" value="Chromosome"/>
</dbReference>
<dbReference type="GO" id="GO:0015935">
    <property type="term" value="C:small ribosomal subunit"/>
    <property type="evidence" value="ECO:0007669"/>
    <property type="project" value="InterPro"/>
</dbReference>
<dbReference type="GO" id="GO:0019843">
    <property type="term" value="F:rRNA binding"/>
    <property type="evidence" value="ECO:0007669"/>
    <property type="project" value="UniProtKB-UniRule"/>
</dbReference>
<dbReference type="GO" id="GO:0003735">
    <property type="term" value="F:structural constituent of ribosome"/>
    <property type="evidence" value="ECO:0007669"/>
    <property type="project" value="InterPro"/>
</dbReference>
<dbReference type="GO" id="GO:0006412">
    <property type="term" value="P:translation"/>
    <property type="evidence" value="ECO:0007669"/>
    <property type="project" value="UniProtKB-UniRule"/>
</dbReference>
<dbReference type="FunFam" id="3.30.160.20:FF:000001">
    <property type="entry name" value="30S ribosomal protein S5"/>
    <property type="match status" value="1"/>
</dbReference>
<dbReference type="FunFam" id="3.30.230.10:FF:000002">
    <property type="entry name" value="30S ribosomal protein S5"/>
    <property type="match status" value="1"/>
</dbReference>
<dbReference type="Gene3D" id="3.30.160.20">
    <property type="match status" value="1"/>
</dbReference>
<dbReference type="Gene3D" id="3.30.230.10">
    <property type="match status" value="1"/>
</dbReference>
<dbReference type="HAMAP" id="MF_01307_B">
    <property type="entry name" value="Ribosomal_uS5_B"/>
    <property type="match status" value="1"/>
</dbReference>
<dbReference type="InterPro" id="IPR020568">
    <property type="entry name" value="Ribosomal_Su5_D2-typ_SF"/>
</dbReference>
<dbReference type="InterPro" id="IPR000851">
    <property type="entry name" value="Ribosomal_uS5"/>
</dbReference>
<dbReference type="InterPro" id="IPR005712">
    <property type="entry name" value="Ribosomal_uS5_bac-type"/>
</dbReference>
<dbReference type="InterPro" id="IPR005324">
    <property type="entry name" value="Ribosomal_uS5_C"/>
</dbReference>
<dbReference type="InterPro" id="IPR013810">
    <property type="entry name" value="Ribosomal_uS5_N"/>
</dbReference>
<dbReference type="InterPro" id="IPR018192">
    <property type="entry name" value="Ribosomal_uS5_N_CS"/>
</dbReference>
<dbReference type="InterPro" id="IPR014721">
    <property type="entry name" value="Ribsml_uS5_D2-typ_fold_subgr"/>
</dbReference>
<dbReference type="NCBIfam" id="TIGR01021">
    <property type="entry name" value="rpsE_bact"/>
    <property type="match status" value="1"/>
</dbReference>
<dbReference type="PANTHER" id="PTHR48277">
    <property type="entry name" value="MITOCHONDRIAL RIBOSOMAL PROTEIN S5"/>
    <property type="match status" value="1"/>
</dbReference>
<dbReference type="PANTHER" id="PTHR48277:SF1">
    <property type="entry name" value="MITOCHONDRIAL RIBOSOMAL PROTEIN S5"/>
    <property type="match status" value="1"/>
</dbReference>
<dbReference type="Pfam" id="PF00333">
    <property type="entry name" value="Ribosomal_S5"/>
    <property type="match status" value="1"/>
</dbReference>
<dbReference type="Pfam" id="PF03719">
    <property type="entry name" value="Ribosomal_S5_C"/>
    <property type="match status" value="1"/>
</dbReference>
<dbReference type="SUPFAM" id="SSF54768">
    <property type="entry name" value="dsRNA-binding domain-like"/>
    <property type="match status" value="1"/>
</dbReference>
<dbReference type="SUPFAM" id="SSF54211">
    <property type="entry name" value="Ribosomal protein S5 domain 2-like"/>
    <property type="match status" value="1"/>
</dbReference>
<dbReference type="PROSITE" id="PS00585">
    <property type="entry name" value="RIBOSOMAL_S5"/>
    <property type="match status" value="1"/>
</dbReference>
<dbReference type="PROSITE" id="PS50881">
    <property type="entry name" value="S5_DSRBD"/>
    <property type="match status" value="1"/>
</dbReference>
<proteinExistence type="inferred from homology"/>
<reference key="1">
    <citation type="journal article" date="2010" name="PLoS ONE">
        <title>Genome sequence of Cronobacter sakazakii BAA-894 and comparative genomic hybridization analysis with other Cronobacter species.</title>
        <authorList>
            <person name="Kucerova E."/>
            <person name="Clifton S.W."/>
            <person name="Xia X.Q."/>
            <person name="Long F."/>
            <person name="Porwollik S."/>
            <person name="Fulton L."/>
            <person name="Fronick C."/>
            <person name="Minx P."/>
            <person name="Kyung K."/>
            <person name="Warren W."/>
            <person name="Fulton R."/>
            <person name="Feng D."/>
            <person name="Wollam A."/>
            <person name="Shah N."/>
            <person name="Bhonagiri V."/>
            <person name="Nash W.E."/>
            <person name="Hallsworth-Pepin K."/>
            <person name="Wilson R.K."/>
            <person name="McClelland M."/>
            <person name="Forsythe S.J."/>
        </authorList>
    </citation>
    <scope>NUCLEOTIDE SEQUENCE [LARGE SCALE GENOMIC DNA]</scope>
    <source>
        <strain>ATCC BAA-894</strain>
    </source>
</reference>
<accession>A7MPG7</accession>
<comment type="function">
    <text evidence="1">With S4 and S12 plays an important role in translational accuracy.</text>
</comment>
<comment type="function">
    <text evidence="1">Located at the back of the 30S subunit body where it stabilizes the conformation of the head with respect to the body.</text>
</comment>
<comment type="subunit">
    <text evidence="1">Part of the 30S ribosomal subunit. Contacts proteins S4 and S8.</text>
</comment>
<comment type="domain">
    <text>The N-terminal domain interacts with the head of the 30S subunit; the C-terminal domain interacts with the body and contacts protein S4. The interaction surface between S4 and S5 is involved in control of translational fidelity.</text>
</comment>
<comment type="similarity">
    <text evidence="1">Belongs to the universal ribosomal protein uS5 family.</text>
</comment>
<gene>
    <name evidence="1" type="primary">rpsE</name>
    <name type="ordered locus">ESA_00024</name>
</gene>
<feature type="chain" id="PRO_1000086010" description="Small ribosomal subunit protein uS5">
    <location>
        <begin position="1"/>
        <end position="166"/>
    </location>
</feature>
<feature type="domain" description="S5 DRBM" evidence="1">
    <location>
        <begin position="11"/>
        <end position="74"/>
    </location>
</feature>
<sequence>MAHIEKQAGELQEKLIAVNRVSKTVKGGRIFSFTALTVVGDGNGRVGFGYGKAREVPAAIQKAMEKARRNMINVALNHGTLQHPVKGAHTGSRVFMQPASEGTGIIAGGAMRAVLEVAGVHNVLAKAYGSTNPINVVRATIDGLANMKSPEMVAAKRGKSVEEILG</sequence>
<protein>
    <recommendedName>
        <fullName evidence="1">Small ribosomal subunit protein uS5</fullName>
    </recommendedName>
    <alternativeName>
        <fullName evidence="2">30S ribosomal protein S5</fullName>
    </alternativeName>
</protein>
<name>RS5_CROS8</name>
<organism>
    <name type="scientific">Cronobacter sakazakii (strain ATCC BAA-894)</name>
    <name type="common">Enterobacter sakazakii</name>
    <dbReference type="NCBI Taxonomy" id="290339"/>
    <lineage>
        <taxon>Bacteria</taxon>
        <taxon>Pseudomonadati</taxon>
        <taxon>Pseudomonadota</taxon>
        <taxon>Gammaproteobacteria</taxon>
        <taxon>Enterobacterales</taxon>
        <taxon>Enterobacteriaceae</taxon>
        <taxon>Cronobacter</taxon>
    </lineage>
</organism>